<reference key="1">
    <citation type="journal article" date="2001" name="Science">
        <title>Comparative genomics of Listeria species.</title>
        <authorList>
            <person name="Glaser P."/>
            <person name="Frangeul L."/>
            <person name="Buchrieser C."/>
            <person name="Rusniok C."/>
            <person name="Amend A."/>
            <person name="Baquero F."/>
            <person name="Berche P."/>
            <person name="Bloecker H."/>
            <person name="Brandt P."/>
            <person name="Chakraborty T."/>
            <person name="Charbit A."/>
            <person name="Chetouani F."/>
            <person name="Couve E."/>
            <person name="de Daruvar A."/>
            <person name="Dehoux P."/>
            <person name="Domann E."/>
            <person name="Dominguez-Bernal G."/>
            <person name="Duchaud E."/>
            <person name="Durant L."/>
            <person name="Dussurget O."/>
            <person name="Entian K.-D."/>
            <person name="Fsihi H."/>
            <person name="Garcia-del Portillo F."/>
            <person name="Garrido P."/>
            <person name="Gautier L."/>
            <person name="Goebel W."/>
            <person name="Gomez-Lopez N."/>
            <person name="Hain T."/>
            <person name="Hauf J."/>
            <person name="Jackson D."/>
            <person name="Jones L.-M."/>
            <person name="Kaerst U."/>
            <person name="Kreft J."/>
            <person name="Kuhn M."/>
            <person name="Kunst F."/>
            <person name="Kurapkat G."/>
            <person name="Madueno E."/>
            <person name="Maitournam A."/>
            <person name="Mata Vicente J."/>
            <person name="Ng E."/>
            <person name="Nedjari H."/>
            <person name="Nordsiek G."/>
            <person name="Novella S."/>
            <person name="de Pablos B."/>
            <person name="Perez-Diaz J.-C."/>
            <person name="Purcell R."/>
            <person name="Remmel B."/>
            <person name="Rose M."/>
            <person name="Schlueter T."/>
            <person name="Simoes N."/>
            <person name="Tierrez A."/>
            <person name="Vazquez-Boland J.-A."/>
            <person name="Voss H."/>
            <person name="Wehland J."/>
            <person name="Cossart P."/>
        </authorList>
    </citation>
    <scope>NUCLEOTIDE SEQUENCE [LARGE SCALE GENOMIC DNA]</scope>
    <source>
        <strain>ATCC BAA-680 / CLIP 11262</strain>
    </source>
</reference>
<keyword id="KW-0963">Cytoplasm</keyword>
<feature type="chain" id="PRO_0000107808" description="Gluconeogenesis factor">
    <location>
        <begin position="1"/>
        <end position="322"/>
    </location>
</feature>
<comment type="function">
    <text evidence="1">Required for morphogenesis under gluconeogenic growth conditions.</text>
</comment>
<comment type="subcellular location">
    <subcellularLocation>
        <location evidence="1">Cytoplasm</location>
    </subcellularLocation>
</comment>
<comment type="similarity">
    <text evidence="1">Belongs to the gluconeogenesis factor family.</text>
</comment>
<sequence length="322" mass="35032">MSKETKPKVVVIGGGTGLPVVLKGLKKKEIHLTAIVTVADDGGSSGKIREQMDVLPPGDIRNVMLALSNVDPRVVDLFQYRFAVDGDLSGHVIGNLILTALSQLNDSYVDAINVLATVLKIRGKVIPATDQPLILNAEMEDGSIVHGESLIPLQGKHINRVFIEPENVKPYPTAVEAVKEADLIVIGPGSLYTSILPNLLLEELAEEITASKAQKVYITNILTQIGETDFFSDADHIKVIHEHVGKSFIDKTLINTTTVPKELLFPEDVAQVEHNAEEMEKLGVEAIYQDFLSTEDGLVRHAADKVADALLAMLPNKNNEKE</sequence>
<organism>
    <name type="scientific">Listeria innocua serovar 6a (strain ATCC BAA-680 / CLIP 11262)</name>
    <dbReference type="NCBI Taxonomy" id="272626"/>
    <lineage>
        <taxon>Bacteria</taxon>
        <taxon>Bacillati</taxon>
        <taxon>Bacillota</taxon>
        <taxon>Bacilli</taxon>
        <taxon>Bacillales</taxon>
        <taxon>Listeriaceae</taxon>
        <taxon>Listeria</taxon>
    </lineage>
</organism>
<protein>
    <recommendedName>
        <fullName evidence="1">Gluconeogenesis factor</fullName>
    </recommendedName>
</protein>
<accession>Q928C0</accession>
<proteinExistence type="inferred from homology"/>
<evidence type="ECO:0000255" key="1">
    <source>
        <dbReference type="HAMAP-Rule" id="MF_00973"/>
    </source>
</evidence>
<dbReference type="EMBL" id="AL596173">
    <property type="protein sequence ID" value="CAC97843.1"/>
    <property type="molecule type" value="Genomic_DNA"/>
</dbReference>
<dbReference type="PIR" id="AC1759">
    <property type="entry name" value="AC1759"/>
</dbReference>
<dbReference type="RefSeq" id="WP_010991301.1">
    <property type="nucleotide sequence ID" value="NC_003212.1"/>
</dbReference>
<dbReference type="SMR" id="Q928C0"/>
<dbReference type="STRING" id="272626.gene:17566997"/>
<dbReference type="KEGG" id="lin:lin2616"/>
<dbReference type="eggNOG" id="COG0391">
    <property type="taxonomic scope" value="Bacteria"/>
</dbReference>
<dbReference type="HOGENOM" id="CLU_044041_0_1_9"/>
<dbReference type="OrthoDB" id="9783842at2"/>
<dbReference type="Proteomes" id="UP000002513">
    <property type="component" value="Chromosome"/>
</dbReference>
<dbReference type="GO" id="GO:0005737">
    <property type="term" value="C:cytoplasm"/>
    <property type="evidence" value="ECO:0007669"/>
    <property type="project" value="UniProtKB-SubCell"/>
</dbReference>
<dbReference type="GO" id="GO:0043743">
    <property type="term" value="F:LPPG:FO 2-phospho-L-lactate transferase activity"/>
    <property type="evidence" value="ECO:0007669"/>
    <property type="project" value="InterPro"/>
</dbReference>
<dbReference type="GO" id="GO:0008360">
    <property type="term" value="P:regulation of cell shape"/>
    <property type="evidence" value="ECO:0007669"/>
    <property type="project" value="UniProtKB-UniRule"/>
</dbReference>
<dbReference type="CDD" id="cd07187">
    <property type="entry name" value="YvcK_like"/>
    <property type="match status" value="1"/>
</dbReference>
<dbReference type="Gene3D" id="3.40.50.10680">
    <property type="entry name" value="CofD-like domains"/>
    <property type="match status" value="1"/>
</dbReference>
<dbReference type="HAMAP" id="MF_00973">
    <property type="entry name" value="Gluconeogen_factor"/>
    <property type="match status" value="1"/>
</dbReference>
<dbReference type="InterPro" id="IPR002882">
    <property type="entry name" value="CofD"/>
</dbReference>
<dbReference type="InterPro" id="IPR038136">
    <property type="entry name" value="CofD-like_dom_sf"/>
</dbReference>
<dbReference type="InterPro" id="IPR010119">
    <property type="entry name" value="Gluconeogen_factor"/>
</dbReference>
<dbReference type="NCBIfam" id="TIGR01826">
    <property type="entry name" value="CofD_related"/>
    <property type="match status" value="1"/>
</dbReference>
<dbReference type="PANTHER" id="PTHR30135:SF3">
    <property type="entry name" value="GLUCONEOGENESIS FACTOR-RELATED"/>
    <property type="match status" value="1"/>
</dbReference>
<dbReference type="PANTHER" id="PTHR30135">
    <property type="entry name" value="UNCHARACTERIZED PROTEIN YVCK-RELATED"/>
    <property type="match status" value="1"/>
</dbReference>
<dbReference type="Pfam" id="PF01933">
    <property type="entry name" value="CofD"/>
    <property type="match status" value="1"/>
</dbReference>
<dbReference type="SUPFAM" id="SSF142338">
    <property type="entry name" value="CofD-like"/>
    <property type="match status" value="1"/>
</dbReference>
<name>GNGF_LISIN</name>
<gene>
    <name type="ordered locus">lin2616</name>
</gene>